<protein>
    <recommendedName>
        <fullName evidence="1">Thymidine kinase</fullName>
        <ecNumber evidence="1">2.7.1.21</ecNumber>
    </recommendedName>
</protein>
<name>KITH_STAAR</name>
<gene>
    <name evidence="1" type="primary">tdk</name>
    <name type="ordered locus">SAR2207</name>
</gene>
<organism>
    <name type="scientific">Staphylococcus aureus (strain MRSA252)</name>
    <dbReference type="NCBI Taxonomy" id="282458"/>
    <lineage>
        <taxon>Bacteria</taxon>
        <taxon>Bacillati</taxon>
        <taxon>Bacillota</taxon>
        <taxon>Bacilli</taxon>
        <taxon>Bacillales</taxon>
        <taxon>Staphylococcaceae</taxon>
        <taxon>Staphylococcus</taxon>
    </lineage>
</organism>
<reference key="1">
    <citation type="journal article" date="2004" name="Proc. Natl. Acad. Sci. U.S.A.">
        <title>Complete genomes of two clinical Staphylococcus aureus strains: evidence for the rapid evolution of virulence and drug resistance.</title>
        <authorList>
            <person name="Holden M.T.G."/>
            <person name="Feil E.J."/>
            <person name="Lindsay J.A."/>
            <person name="Peacock S.J."/>
            <person name="Day N.P.J."/>
            <person name="Enright M.C."/>
            <person name="Foster T.J."/>
            <person name="Moore C.E."/>
            <person name="Hurst L."/>
            <person name="Atkin R."/>
            <person name="Barron A."/>
            <person name="Bason N."/>
            <person name="Bentley S.D."/>
            <person name="Chillingworth C."/>
            <person name="Chillingworth T."/>
            <person name="Churcher C."/>
            <person name="Clark L."/>
            <person name="Corton C."/>
            <person name="Cronin A."/>
            <person name="Doggett J."/>
            <person name="Dowd L."/>
            <person name="Feltwell T."/>
            <person name="Hance Z."/>
            <person name="Harris B."/>
            <person name="Hauser H."/>
            <person name="Holroyd S."/>
            <person name="Jagels K."/>
            <person name="James K.D."/>
            <person name="Lennard N."/>
            <person name="Line A."/>
            <person name="Mayes R."/>
            <person name="Moule S."/>
            <person name="Mungall K."/>
            <person name="Ormond D."/>
            <person name="Quail M.A."/>
            <person name="Rabbinowitsch E."/>
            <person name="Rutherford K.M."/>
            <person name="Sanders M."/>
            <person name="Sharp S."/>
            <person name="Simmonds M."/>
            <person name="Stevens K."/>
            <person name="Whitehead S."/>
            <person name="Barrell B.G."/>
            <person name="Spratt B.G."/>
            <person name="Parkhill J."/>
        </authorList>
    </citation>
    <scope>NUCLEOTIDE SEQUENCE [LARGE SCALE GENOMIC DNA]</scope>
    <source>
        <strain>MRSA252</strain>
    </source>
</reference>
<keyword id="KW-0067">ATP-binding</keyword>
<keyword id="KW-0963">Cytoplasm</keyword>
<keyword id="KW-0237">DNA synthesis</keyword>
<keyword id="KW-0418">Kinase</keyword>
<keyword id="KW-0479">Metal-binding</keyword>
<keyword id="KW-0547">Nucleotide-binding</keyword>
<keyword id="KW-0808">Transferase</keyword>
<keyword id="KW-0862">Zinc</keyword>
<evidence type="ECO:0000255" key="1">
    <source>
        <dbReference type="HAMAP-Rule" id="MF_00124"/>
    </source>
</evidence>
<accession>Q6GEV6</accession>
<sequence length="199" mass="22214">MYETYHSGWIECITGSMFSGKSEELIRRLRRGIYAKQKVVVFKPAIDDRYHKEKVVSHNGNAIEAINISKASEIMTHDLTNVDVIGIDEVQFFDDEIVSIVEKLSADGHRVIVAGLDMDFRGEPFEPMPKLMAVSEQVTKLQAVCAVCGSSSSRTQRLINGKPAKIDDPIILVGANESYEPRCRAHHIVAPSDNNKEEL</sequence>
<dbReference type="EC" id="2.7.1.21" evidence="1"/>
<dbReference type="EMBL" id="BX571856">
    <property type="protein sequence ID" value="CAG41188.1"/>
    <property type="molecule type" value="Genomic_DNA"/>
</dbReference>
<dbReference type="RefSeq" id="WP_000273356.1">
    <property type="nucleotide sequence ID" value="NC_002952.2"/>
</dbReference>
<dbReference type="SMR" id="Q6GEV6"/>
<dbReference type="KEGG" id="sar:SAR2207"/>
<dbReference type="HOGENOM" id="CLU_064400_3_0_9"/>
<dbReference type="Proteomes" id="UP000000596">
    <property type="component" value="Chromosome"/>
</dbReference>
<dbReference type="GO" id="GO:0005829">
    <property type="term" value="C:cytosol"/>
    <property type="evidence" value="ECO:0007669"/>
    <property type="project" value="TreeGrafter"/>
</dbReference>
<dbReference type="GO" id="GO:0005524">
    <property type="term" value="F:ATP binding"/>
    <property type="evidence" value="ECO:0007669"/>
    <property type="project" value="UniProtKB-UniRule"/>
</dbReference>
<dbReference type="GO" id="GO:0004797">
    <property type="term" value="F:thymidine kinase activity"/>
    <property type="evidence" value="ECO:0007669"/>
    <property type="project" value="UniProtKB-UniRule"/>
</dbReference>
<dbReference type="GO" id="GO:0008270">
    <property type="term" value="F:zinc ion binding"/>
    <property type="evidence" value="ECO:0007669"/>
    <property type="project" value="UniProtKB-UniRule"/>
</dbReference>
<dbReference type="GO" id="GO:0071897">
    <property type="term" value="P:DNA biosynthetic process"/>
    <property type="evidence" value="ECO:0007669"/>
    <property type="project" value="UniProtKB-KW"/>
</dbReference>
<dbReference type="GO" id="GO:0046104">
    <property type="term" value="P:thymidine metabolic process"/>
    <property type="evidence" value="ECO:0007669"/>
    <property type="project" value="TreeGrafter"/>
</dbReference>
<dbReference type="FunFam" id="3.30.60.20:FF:000026">
    <property type="entry name" value="Thymidine kinase"/>
    <property type="match status" value="1"/>
</dbReference>
<dbReference type="FunFam" id="3.40.50.300:FF:000384">
    <property type="entry name" value="Thymidine kinase"/>
    <property type="match status" value="1"/>
</dbReference>
<dbReference type="Gene3D" id="3.30.60.20">
    <property type="match status" value="1"/>
</dbReference>
<dbReference type="Gene3D" id="3.40.50.300">
    <property type="entry name" value="P-loop containing nucleotide triphosphate hydrolases"/>
    <property type="match status" value="1"/>
</dbReference>
<dbReference type="HAMAP" id="MF_00124">
    <property type="entry name" value="Thymidine_kinase"/>
    <property type="match status" value="1"/>
</dbReference>
<dbReference type="InterPro" id="IPR027417">
    <property type="entry name" value="P-loop_NTPase"/>
</dbReference>
<dbReference type="InterPro" id="IPR001267">
    <property type="entry name" value="Thymidine_kinase"/>
</dbReference>
<dbReference type="InterPro" id="IPR020633">
    <property type="entry name" value="Thymidine_kinase_CS"/>
</dbReference>
<dbReference type="NCBIfam" id="NF003296">
    <property type="entry name" value="PRK04296.1-1"/>
    <property type="match status" value="1"/>
</dbReference>
<dbReference type="PANTHER" id="PTHR11441">
    <property type="entry name" value="THYMIDINE KINASE"/>
    <property type="match status" value="1"/>
</dbReference>
<dbReference type="PANTHER" id="PTHR11441:SF0">
    <property type="entry name" value="THYMIDINE KINASE, CYTOSOLIC"/>
    <property type="match status" value="1"/>
</dbReference>
<dbReference type="Pfam" id="PF00265">
    <property type="entry name" value="TK"/>
    <property type="match status" value="1"/>
</dbReference>
<dbReference type="PIRSF" id="PIRSF035805">
    <property type="entry name" value="TK_cell"/>
    <property type="match status" value="1"/>
</dbReference>
<dbReference type="SUPFAM" id="SSF57716">
    <property type="entry name" value="Glucocorticoid receptor-like (DNA-binding domain)"/>
    <property type="match status" value="1"/>
</dbReference>
<dbReference type="SUPFAM" id="SSF52540">
    <property type="entry name" value="P-loop containing nucleoside triphosphate hydrolases"/>
    <property type="match status" value="1"/>
</dbReference>
<dbReference type="PROSITE" id="PS00603">
    <property type="entry name" value="TK_CELLULAR_TYPE"/>
    <property type="match status" value="1"/>
</dbReference>
<comment type="catalytic activity">
    <reaction evidence="1">
        <text>thymidine + ATP = dTMP + ADP + H(+)</text>
        <dbReference type="Rhea" id="RHEA:19129"/>
        <dbReference type="ChEBI" id="CHEBI:15378"/>
        <dbReference type="ChEBI" id="CHEBI:17748"/>
        <dbReference type="ChEBI" id="CHEBI:30616"/>
        <dbReference type="ChEBI" id="CHEBI:63528"/>
        <dbReference type="ChEBI" id="CHEBI:456216"/>
        <dbReference type="EC" id="2.7.1.21"/>
    </reaction>
</comment>
<comment type="subunit">
    <text evidence="1">Homotetramer.</text>
</comment>
<comment type="subcellular location">
    <subcellularLocation>
        <location evidence="1">Cytoplasm</location>
    </subcellularLocation>
</comment>
<comment type="similarity">
    <text evidence="1">Belongs to the thymidine kinase family.</text>
</comment>
<feature type="chain" id="PRO_0000175021" description="Thymidine kinase">
    <location>
        <begin position="1"/>
        <end position="199"/>
    </location>
</feature>
<feature type="active site" description="Proton acceptor" evidence="1">
    <location>
        <position position="89"/>
    </location>
</feature>
<feature type="binding site" evidence="1">
    <location>
        <begin position="15"/>
        <end position="22"/>
    </location>
    <ligand>
        <name>ATP</name>
        <dbReference type="ChEBI" id="CHEBI:30616"/>
    </ligand>
</feature>
<feature type="binding site" evidence="1">
    <location>
        <begin position="88"/>
        <end position="91"/>
    </location>
    <ligand>
        <name>ATP</name>
        <dbReference type="ChEBI" id="CHEBI:30616"/>
    </ligand>
</feature>
<feature type="binding site" evidence="1">
    <location>
        <position position="145"/>
    </location>
    <ligand>
        <name>Zn(2+)</name>
        <dbReference type="ChEBI" id="CHEBI:29105"/>
    </ligand>
</feature>
<feature type="binding site" evidence="1">
    <location>
        <position position="148"/>
    </location>
    <ligand>
        <name>Zn(2+)</name>
        <dbReference type="ChEBI" id="CHEBI:29105"/>
    </ligand>
</feature>
<feature type="binding site" evidence="1">
    <location>
        <position position="183"/>
    </location>
    <ligand>
        <name>Zn(2+)</name>
        <dbReference type="ChEBI" id="CHEBI:29105"/>
    </ligand>
</feature>
<feature type="binding site" evidence="1">
    <location>
        <position position="186"/>
    </location>
    <ligand>
        <name>Zn(2+)</name>
        <dbReference type="ChEBI" id="CHEBI:29105"/>
    </ligand>
</feature>
<proteinExistence type="inferred from homology"/>